<feature type="chain" id="PRO_0000449102" description="L-aspartate--glyoxylate aminotransferase">
    <location>
        <begin position="1"/>
        <end position="396"/>
    </location>
</feature>
<feature type="modified residue" description="N6-(pyridoxal phosphate)lysine" evidence="1">
    <location>
        <position position="196"/>
    </location>
</feature>
<dbReference type="EC" id="2.6.1.35" evidence="2"/>
<dbReference type="EMBL" id="CP000490">
    <property type="protein sequence ID" value="ABL71987.1"/>
    <property type="molecule type" value="Genomic_DNA"/>
</dbReference>
<dbReference type="RefSeq" id="WP_011750154.1">
    <property type="nucleotide sequence ID" value="NC_008687.1"/>
</dbReference>
<dbReference type="SMR" id="A1B8Z3"/>
<dbReference type="STRING" id="318586.Pden_3921"/>
<dbReference type="EnsemblBacteria" id="ABL71987">
    <property type="protein sequence ID" value="ABL71987"/>
    <property type="gene ID" value="Pden_3921"/>
</dbReference>
<dbReference type="GeneID" id="93453581"/>
<dbReference type="KEGG" id="pde:Pden_3921"/>
<dbReference type="eggNOG" id="COG0075">
    <property type="taxonomic scope" value="Bacteria"/>
</dbReference>
<dbReference type="HOGENOM" id="CLU_027686_1_0_5"/>
<dbReference type="OrthoDB" id="389074at2"/>
<dbReference type="Proteomes" id="UP000000361">
    <property type="component" value="Chromosome 2"/>
</dbReference>
<dbReference type="GO" id="GO:0008453">
    <property type="term" value="F:alanine-glyoxylate transaminase activity"/>
    <property type="evidence" value="ECO:0007669"/>
    <property type="project" value="TreeGrafter"/>
</dbReference>
<dbReference type="GO" id="GO:0047303">
    <property type="term" value="F:glycine-oxaloacetate transaminase activity"/>
    <property type="evidence" value="ECO:0000314"/>
    <property type="project" value="UniProtKB"/>
</dbReference>
<dbReference type="GO" id="GO:0004760">
    <property type="term" value="F:L-serine-pyruvate transaminase activity"/>
    <property type="evidence" value="ECO:0007669"/>
    <property type="project" value="TreeGrafter"/>
</dbReference>
<dbReference type="GO" id="GO:0019265">
    <property type="term" value="P:glycine biosynthetic process, by transamination of glyoxylate"/>
    <property type="evidence" value="ECO:0007669"/>
    <property type="project" value="TreeGrafter"/>
</dbReference>
<dbReference type="GO" id="GO:0046296">
    <property type="term" value="P:glycolate catabolic process"/>
    <property type="evidence" value="ECO:0000315"/>
    <property type="project" value="UniProtKB"/>
</dbReference>
<dbReference type="GO" id="GO:0009436">
    <property type="term" value="P:glyoxylate catabolic process"/>
    <property type="evidence" value="ECO:0000315"/>
    <property type="project" value="UniProtKB"/>
</dbReference>
<dbReference type="CDD" id="cd06451">
    <property type="entry name" value="AGAT_like"/>
    <property type="match status" value="1"/>
</dbReference>
<dbReference type="FunFam" id="3.40.640.10:FF:000054">
    <property type="entry name" value="Serine--glyoxylate aminotransferase"/>
    <property type="match status" value="1"/>
</dbReference>
<dbReference type="FunFam" id="3.90.1150.10:FF:000031">
    <property type="entry name" value="Serine--glyoxylate aminotransferase"/>
    <property type="match status" value="1"/>
</dbReference>
<dbReference type="Gene3D" id="3.90.1150.10">
    <property type="entry name" value="Aspartate Aminotransferase, domain 1"/>
    <property type="match status" value="1"/>
</dbReference>
<dbReference type="Gene3D" id="3.40.640.10">
    <property type="entry name" value="Type I PLP-dependent aspartate aminotransferase-like (Major domain)"/>
    <property type="match status" value="1"/>
</dbReference>
<dbReference type="InterPro" id="IPR000192">
    <property type="entry name" value="Aminotrans_V_dom"/>
</dbReference>
<dbReference type="InterPro" id="IPR020578">
    <property type="entry name" value="Aminotrans_V_PyrdxlP_BS"/>
</dbReference>
<dbReference type="InterPro" id="IPR054863">
    <property type="entry name" value="AspGlyoxATase"/>
</dbReference>
<dbReference type="InterPro" id="IPR015424">
    <property type="entry name" value="PyrdxlP-dep_Trfase"/>
</dbReference>
<dbReference type="InterPro" id="IPR015421">
    <property type="entry name" value="PyrdxlP-dep_Trfase_major"/>
</dbReference>
<dbReference type="InterPro" id="IPR015422">
    <property type="entry name" value="PyrdxlP-dep_Trfase_small"/>
</dbReference>
<dbReference type="InterPro" id="IPR024169">
    <property type="entry name" value="SP_NH2Trfase/AEP_transaminase"/>
</dbReference>
<dbReference type="NCBIfam" id="NF045640">
    <property type="entry name" value="AspGlyoxATaseBhcA"/>
    <property type="match status" value="1"/>
</dbReference>
<dbReference type="PANTHER" id="PTHR21152:SF24">
    <property type="entry name" value="ALANINE--GLYOXYLATE AMINOTRANSFERASE 1"/>
    <property type="match status" value="1"/>
</dbReference>
<dbReference type="PANTHER" id="PTHR21152">
    <property type="entry name" value="AMINOTRANSFERASE CLASS V"/>
    <property type="match status" value="1"/>
</dbReference>
<dbReference type="Pfam" id="PF00266">
    <property type="entry name" value="Aminotran_5"/>
    <property type="match status" value="1"/>
</dbReference>
<dbReference type="PIRSF" id="PIRSF000524">
    <property type="entry name" value="SPT"/>
    <property type="match status" value="1"/>
</dbReference>
<dbReference type="SUPFAM" id="SSF53383">
    <property type="entry name" value="PLP-dependent transferases"/>
    <property type="match status" value="1"/>
</dbReference>
<dbReference type="PROSITE" id="PS00595">
    <property type="entry name" value="AA_TRANSFER_CLASS_5"/>
    <property type="match status" value="1"/>
</dbReference>
<organism>
    <name type="scientific">Paracoccus denitrificans (strain Pd 1222)</name>
    <dbReference type="NCBI Taxonomy" id="318586"/>
    <lineage>
        <taxon>Bacteria</taxon>
        <taxon>Pseudomonadati</taxon>
        <taxon>Pseudomonadota</taxon>
        <taxon>Alphaproteobacteria</taxon>
        <taxon>Rhodobacterales</taxon>
        <taxon>Paracoccaceae</taxon>
        <taxon>Paracoccus</taxon>
    </lineage>
</organism>
<reference key="1">
    <citation type="submission" date="2006-12" db="EMBL/GenBank/DDBJ databases">
        <title>Complete sequence of chromosome 2 of Paracoccus denitrificans PD1222.</title>
        <authorList>
            <person name="Copeland A."/>
            <person name="Lucas S."/>
            <person name="Lapidus A."/>
            <person name="Barry K."/>
            <person name="Detter J.C."/>
            <person name="Glavina del Rio T."/>
            <person name="Hammon N."/>
            <person name="Israni S."/>
            <person name="Dalin E."/>
            <person name="Tice H."/>
            <person name="Pitluck S."/>
            <person name="Munk A.C."/>
            <person name="Brettin T."/>
            <person name="Bruce D."/>
            <person name="Han C."/>
            <person name="Tapia R."/>
            <person name="Gilna P."/>
            <person name="Schmutz J."/>
            <person name="Larimer F."/>
            <person name="Land M."/>
            <person name="Hauser L."/>
            <person name="Kyrpides N."/>
            <person name="Lykidis A."/>
            <person name="Spiro S."/>
            <person name="Richardson D.J."/>
            <person name="Moir J.W.B."/>
            <person name="Ferguson S.J."/>
            <person name="van Spanning R.J.M."/>
            <person name="Richardson P."/>
        </authorList>
    </citation>
    <scope>NUCLEOTIDE SEQUENCE [LARGE SCALE GENOMIC DNA]</scope>
    <source>
        <strain>Pd 1222</strain>
    </source>
</reference>
<reference key="2">
    <citation type="journal article" date="2019" name="Nature">
        <title>Marine Proteobacteria metabolize glycolate via the beta-hydroxyaspartate cycle.</title>
        <authorList>
            <person name="Schada von Borzyskowski L."/>
            <person name="Severi F."/>
            <person name="Krueger K."/>
            <person name="Hermann L."/>
            <person name="Gilardet A."/>
            <person name="Sippel F."/>
            <person name="Pommerenke B."/>
            <person name="Claus P."/>
            <person name="Cortina N.S."/>
            <person name="Glatter T."/>
            <person name="Zauner S."/>
            <person name="Zarzycki J."/>
            <person name="Fuchs B.M."/>
            <person name="Bremer E."/>
            <person name="Maier U.G."/>
            <person name="Amann R.I."/>
            <person name="Erb T.J."/>
        </authorList>
    </citation>
    <scope>FUNCTION</scope>
    <scope>CATALYTIC ACTIVITY</scope>
    <scope>BIOPHYSICOCHEMICAL PROPERTIES</scope>
    <scope>DISRUPTION PHENOTYPE</scope>
    <scope>INDUCTION</scope>
    <source>
        <strain>ATCC 17741 / DSM 413 / NBRC 16712 / NCCB 22021 / NCIMB 11627</strain>
    </source>
</reference>
<accession>A1B8Z3</accession>
<comment type="function">
    <text evidence="2">Catalyzes the transamination of glyoxylate into glycine using L-aspartate as the preferred amino group donor. Is essential for the growth of P.denitrificans in the presence of glycolate and glyoxylate since it functions in glyoxylate assimilation via the beta-hydroxyaspartate cycle (BHAC). Can catalyze the reverse reaction in vitro, and also use L-serine and L-glutamate as amino group donor, but with much less efficiency than L-aspartate.</text>
</comment>
<comment type="catalytic activity">
    <reaction evidence="2">
        <text>oxaloacetate + glycine = glyoxylate + L-aspartate</text>
        <dbReference type="Rhea" id="RHEA:17141"/>
        <dbReference type="ChEBI" id="CHEBI:16452"/>
        <dbReference type="ChEBI" id="CHEBI:29991"/>
        <dbReference type="ChEBI" id="CHEBI:36655"/>
        <dbReference type="ChEBI" id="CHEBI:57305"/>
        <dbReference type="EC" id="2.6.1.35"/>
    </reaction>
    <physiologicalReaction direction="right-to-left" evidence="2">
        <dbReference type="Rhea" id="RHEA:17143"/>
    </physiologicalReaction>
</comment>
<comment type="cofactor">
    <cofactor evidence="5">
        <name>pyridoxal 5'-phosphate</name>
        <dbReference type="ChEBI" id="CHEBI:597326"/>
    </cofactor>
</comment>
<comment type="biophysicochemical properties">
    <kinetics>
        <KM evidence="2">0.43 mM for glyoxylate</KM>
        <KM evidence="2">2.51 mM for L-aspartate</KM>
        <KM evidence="2">9.52 mM for glycine</KM>
        <KM evidence="2">2.9 mM for oxaloacetate</KM>
        <KM evidence="2">2.1 mM for L-serine</KM>
        <KM evidence="2">20.62 mM for L-glutamate</KM>
        <text evidence="2">kcat is 58 sec(-1) for the transamination of glyoxylate using L-aspartate. kcat is 0.76 sec(-1) for the transamination of glycine using oxaloacetate. kcat is 8.8 sec(-1) for the transamination of glyoxylate using L-serine. kcat is 5.0 sec(-1) for the transamination of glyoxylate using L-glutamate.</text>
    </kinetics>
</comment>
<comment type="induction">
    <text evidence="2">Induced by glycolate.</text>
</comment>
<comment type="disruption phenotype">
    <text evidence="2">Abolishes growth on glycolate or glyoxylate, but the deletion mutant strain is still able to grow on acetate, succinate or glucose with comparable growth rates as for the wild type.</text>
</comment>
<comment type="miscellaneous">
    <text evidence="5">The beta-hydroxyaspartate cycle (BHAC) consists of BhcA, BhcB, BhcC, and BhcD enzyme activities. Overall, it converts two molecules of glyoxylate (C2) into oxaloacetate (C4) without the loss of carbon as CO2, under consumption of just one reducing equivalent and regeneration of the catalytic amino donor, which makes it one of the most efficient glyoxylate assimilation pathways. This cycle is of ecological importance in the assimilation of phytoplankton-derived dissolved organic carbon in marine environments by marine Proteobacteria, and suggests a trophic interaction between autotrophic phytoplankton and heterotrophic bacterioplankton. Oxaloacetate formed in the BHAC can directly enter the tricarboxylic acid cycle or serve as substrate for anabolic reactions.</text>
</comment>
<comment type="similarity">
    <text evidence="4">Belongs to the class-V pyridoxal-phosphate-dependent aminotransferase family.</text>
</comment>
<name>BHCA_PARDP</name>
<keyword id="KW-0032">Aminotransferase</keyword>
<keyword id="KW-0663">Pyridoxal phosphate</keyword>
<keyword id="KW-1185">Reference proteome</keyword>
<keyword id="KW-0808">Transferase</keyword>
<sequence length="396" mass="42507">MTSQNPIFIPGPTNIPEEMRKAVDMPTIDHRSPVFGRMLHPALEGVKKVLKTTQAQVFLFPSTGTGGWETAITNTLSPGDKVLAARNGMFSHRWIDMCQRHGLDVTFVETPWGEGVPADRFEEILTADKGHEIRVVLATHNETATGVKSDIAAVRRALDAAKHPALLFVDGVSSIGSMDFRMDEWGVDIAVTGSQKGFMLPPGLAIVGFSPKAMEAVETARLPRTFFDIRDMATGYARNGYPYTPPVGLINGLNASCERILAEGLENVFARHHRIASGVRAAVDAWGLKLCAVRPELYSDSVSAIRVPEGFDANLIVSHALETYDMAFGTGLGQVAGKVFRIGHLGSLTDAMALSGIATAEMVMADLGLPIQLGSGVAAAQEHYRQTTAAAQKKAA</sequence>
<evidence type="ECO:0000250" key="1">
    <source>
        <dbReference type="UniProtKB" id="Q988B8"/>
    </source>
</evidence>
<evidence type="ECO:0000269" key="2">
    <source>
    </source>
</evidence>
<evidence type="ECO:0000303" key="3">
    <source>
    </source>
</evidence>
<evidence type="ECO:0000305" key="4"/>
<evidence type="ECO:0000305" key="5">
    <source>
    </source>
</evidence>
<evidence type="ECO:0000312" key="6">
    <source>
        <dbReference type="EMBL" id="ABL71987.1"/>
    </source>
</evidence>
<protein>
    <recommendedName>
        <fullName evidence="3">L-aspartate--glyoxylate aminotransferase</fullName>
        <ecNumber evidence="2">2.6.1.35</ecNumber>
    </recommendedName>
</protein>
<proteinExistence type="evidence at protein level"/>
<gene>
    <name evidence="3" type="primary">bhcA</name>
    <name evidence="6" type="ordered locus">Pden_3921</name>
</gene>